<organism>
    <name type="scientific">Mus musculus</name>
    <name type="common">Mouse</name>
    <dbReference type="NCBI Taxonomy" id="10090"/>
    <lineage>
        <taxon>Eukaryota</taxon>
        <taxon>Metazoa</taxon>
        <taxon>Chordata</taxon>
        <taxon>Craniata</taxon>
        <taxon>Vertebrata</taxon>
        <taxon>Euteleostomi</taxon>
        <taxon>Mammalia</taxon>
        <taxon>Eutheria</taxon>
        <taxon>Euarchontoglires</taxon>
        <taxon>Glires</taxon>
        <taxon>Rodentia</taxon>
        <taxon>Myomorpha</taxon>
        <taxon>Muroidea</taxon>
        <taxon>Muridae</taxon>
        <taxon>Murinae</taxon>
        <taxon>Mus</taxon>
        <taxon>Mus</taxon>
    </lineage>
</organism>
<keyword id="KW-0002">3D-structure</keyword>
<keyword id="KW-1003">Cell membrane</keyword>
<keyword id="KW-1015">Disulfide bond</keyword>
<keyword id="KW-0272">Extracellular matrix</keyword>
<keyword id="KW-0325">Glycoprotein</keyword>
<keyword id="KW-0472">Membrane</keyword>
<keyword id="KW-0597">Phosphoprotein</keyword>
<keyword id="KW-0654">Proteoglycan</keyword>
<keyword id="KW-0675">Receptor</keyword>
<keyword id="KW-1185">Reference proteome</keyword>
<keyword id="KW-0964">Secreted</keyword>
<keyword id="KW-0732">Signal</keyword>
<keyword id="KW-0812">Transmembrane</keyword>
<keyword id="KW-1133">Transmembrane helix</keyword>
<sequence length="850" mass="93829">MAVTSHHMVPVFVLMSACLATAGPEPSTRCELSPISASHPVQALMESFTVLSGCASRGTTGLPREVHILNLRSTDQGLGQPQREVTLHLNPIASVHTHHKPVVFLLNSPQPLVWHVKTERLAAGVPRLFLVSEGSVVQFSSGNFSLTAETEERSFPQENEHLLHWAQKEYGAVTSFTELKIARNIYIKVGEDQVFPPTCNIGKNFLSLNYLAEYLQPKAAEGCVLASQPHEKEVHIIELISPNSNPYSTFQVDIIIDIRPAREDPEVVKNLVLILKCKKSVNWVIKSFDVKGNLKVIAPDSIGFGKESERSMTVTKLVRNDYPSTQENLMKWALDNGYSPVTSYTIAPVANRFHLRLENNEEMRDEEVHTIPPELRILLGPDHLPALDSPPFQGEIPNGGFPFPFPDIPRRGWKEGEDRIPRPKEPIIPRVQLLPDHREPEEVQGGVNIALSVKCDNEKMVVAVDKDSFQTNGYSGMELTLLDPSCKAKMNGTHFVLESPLNGCGTRHRRSAPDGVVYYNSIVVQAPSPGDSSGWPDGYEDLESGDNGFPGDTDEGETAPLSRAGVVVFNCSLRQLRSPSGFQDQLDGNATFNMELYNTDLFLVPSPGVFSVAENEHVYVEVSVTKADQDLGFAIQTCFISPYSNPDRMSDYTIIENICPKDDSVKFYSSKRVHFPIPHAEVDKKRFSFVFKSVFNTSLLFLHCELTLCSRNKGSQKLPKCVTPDDACTSLDATMIWTMMQNKKTFTKPLAVVLQVDYKENVPNMKESSPVPPPPQIFHGLDTLTVMGIAFAAFVIGALLTGALWYIYSHTGETARRQQVPTSPPASENSSAAHSIGSTQSTPCSSSSTA</sequence>
<feature type="signal peptide" evidence="3">
    <location>
        <begin position="1"/>
        <end position="22"/>
    </location>
</feature>
<feature type="chain" id="PRO_0000041664" description="Transforming growth factor beta receptor type 3">
    <location>
        <begin position="23"/>
        <end position="850"/>
    </location>
</feature>
<feature type="topological domain" description="Extracellular" evidence="3">
    <location>
        <begin position="23"/>
        <end position="785"/>
    </location>
</feature>
<feature type="transmembrane region" description="Helical" evidence="3">
    <location>
        <begin position="786"/>
        <end position="808"/>
    </location>
</feature>
<feature type="topological domain" description="Cytoplasmic" evidence="3">
    <location>
        <begin position="809"/>
        <end position="850"/>
    </location>
</feature>
<feature type="domain" description="ZP" evidence="4">
    <location>
        <begin position="454"/>
        <end position="728"/>
    </location>
</feature>
<feature type="region of interest" description="Disordered" evidence="5">
    <location>
        <begin position="528"/>
        <end position="557"/>
    </location>
</feature>
<feature type="region of interest" description="Interaction with TGF-beta ligand">
    <location>
        <begin position="735"/>
        <end position="749"/>
    </location>
</feature>
<feature type="region of interest" description="Disordered" evidence="5">
    <location>
        <begin position="817"/>
        <end position="850"/>
    </location>
</feature>
<feature type="compositionally biased region" description="Polar residues" evidence="5">
    <location>
        <begin position="817"/>
        <end position="833"/>
    </location>
</feature>
<feature type="compositionally biased region" description="Low complexity" evidence="5">
    <location>
        <begin position="835"/>
        <end position="850"/>
    </location>
</feature>
<feature type="modified residue" description="Phosphothreonine" evidence="2">
    <location>
        <position position="839"/>
    </location>
</feature>
<feature type="glycosylation site" description="N-linked (GlcNAc...) asparagine" evidence="3">
    <location>
        <position position="143"/>
    </location>
</feature>
<feature type="glycosylation site" description="N-linked (GlcNAc...) asparagine" evidence="3">
    <location>
        <position position="491"/>
    </location>
</feature>
<feature type="glycosylation site" description="O-linked (Xyl...) (glycosaminoglycan) serine" evidence="11">
    <location>
        <position position="533"/>
    </location>
</feature>
<feature type="glycosylation site" description="O-linked (Xyl...) (glycosaminoglycan) serine" evidence="11">
    <location>
        <position position="544"/>
    </location>
</feature>
<feature type="glycosylation site" description="N-linked (GlcNAc...) asparagine" evidence="3">
    <location>
        <position position="570"/>
    </location>
</feature>
<feature type="glycosylation site" description="N-linked (GlcNAc...) asparagine" evidence="3">
    <location>
        <position position="589"/>
    </location>
</feature>
<feature type="glycosylation site" description="N-linked (GlcNAc...) asparagine" evidence="3">
    <location>
        <position position="696"/>
    </location>
</feature>
<feature type="disulfide bond" evidence="2">
    <location>
        <begin position="54"/>
        <end position="199"/>
    </location>
</feature>
<feature type="disulfide bond" evidence="8">
    <location>
        <begin position="638"/>
        <end position="704"/>
    </location>
</feature>
<feature type="disulfide bond" evidence="8">
    <location>
        <begin position="659"/>
        <end position="728"/>
    </location>
</feature>
<feature type="disulfide bond" evidence="8">
    <location>
        <begin position="709"/>
        <end position="721"/>
    </location>
</feature>
<feature type="mutagenesis site" description="Loss of glycosaminoglycan chains; when associated with A-544." evidence="11">
    <original>S</original>
    <variation>A</variation>
    <location>
        <position position="533"/>
    </location>
</feature>
<feature type="mutagenesis site" description="Loss of glycosaminoglycan chains; when associated with A-533." evidence="11">
    <original>S</original>
    <variation>A</variation>
    <location>
        <position position="544"/>
    </location>
</feature>
<feature type="sequence conflict" description="In Ref. 2; AAH70428." evidence="12" ref="2">
    <original>Y</original>
    <variation>I</variation>
    <location>
        <position position="322"/>
    </location>
</feature>
<feature type="sequence conflict" description="In Ref. 2; AAH70428." evidence="12" ref="2">
    <original>P</original>
    <variation>S</variation>
    <location>
        <position position="391"/>
    </location>
</feature>
<feature type="sequence conflict" description="In Ref. 2; AAH70428." evidence="12" ref="2">
    <original>N</original>
    <variation>K</variation>
    <location>
        <position position="712"/>
    </location>
</feature>
<feature type="strand" evidence="13">
    <location>
        <begin position="592"/>
        <end position="599"/>
    </location>
</feature>
<feature type="strand" evidence="13">
    <location>
        <begin position="607"/>
        <end position="612"/>
    </location>
</feature>
<feature type="strand" evidence="13">
    <location>
        <begin position="617"/>
        <end position="627"/>
    </location>
</feature>
<feature type="strand" evidence="13">
    <location>
        <begin position="629"/>
        <end position="644"/>
    </location>
</feature>
<feature type="strand" evidence="13">
    <location>
        <begin position="646"/>
        <end position="648"/>
    </location>
</feature>
<feature type="strand" evidence="13">
    <location>
        <begin position="653"/>
        <end position="656"/>
    </location>
</feature>
<feature type="strand" evidence="13">
    <location>
        <begin position="666"/>
        <end position="675"/>
    </location>
</feature>
<feature type="turn" evidence="13">
    <location>
        <begin position="676"/>
        <end position="679"/>
    </location>
</feature>
<feature type="strand" evidence="13">
    <location>
        <begin position="680"/>
        <end position="690"/>
    </location>
</feature>
<feature type="strand" evidence="13">
    <location>
        <begin position="695"/>
        <end position="714"/>
    </location>
</feature>
<feature type="turn" evidence="13">
    <location>
        <begin position="724"/>
        <end position="728"/>
    </location>
</feature>
<feature type="strand" evidence="13">
    <location>
        <begin position="747"/>
        <end position="756"/>
    </location>
</feature>
<protein>
    <recommendedName>
        <fullName>Transforming growth factor beta receptor type 3</fullName>
        <shortName>TGF-beta receptor type 3</shortName>
        <shortName>TGFR-3</shortName>
    </recommendedName>
    <alternativeName>
        <fullName>Betaglycan</fullName>
    </alternativeName>
    <alternativeName>
        <fullName>Transforming growth factor beta receptor III</fullName>
        <shortName>TGF-beta receptor type III</shortName>
    </alternativeName>
</protein>
<proteinExistence type="evidence at protein level"/>
<reference key="1">
    <citation type="journal article" date="1998" name="Biochim. Biophys. Acta">
        <title>Murine betaglycan primary structure, expression and glycosaminoglycan attachment sites.</title>
        <authorList>
            <person name="Ponce-Castaneda M.V."/>
            <person name="Esparza-Lopez J."/>
            <person name="Vilchis-Landeros M.M."/>
            <person name="Mendoza V."/>
            <person name="Lopez-Casillas F."/>
        </authorList>
    </citation>
    <scope>NUCLEOTIDE SEQUENCE [MRNA]</scope>
    <scope>GLYCOSYLATION AT SER-533 AND SER-544</scope>
    <scope>MUTAGENESIS OF SER-533 AND SER-544</scope>
</reference>
<reference key="2">
    <citation type="journal article" date="2004" name="Genome Res.">
        <title>The status, quality, and expansion of the NIH full-length cDNA project: the Mammalian Gene Collection (MGC).</title>
        <authorList>
            <consortium name="The MGC Project Team"/>
        </authorList>
    </citation>
    <scope>NUCLEOTIDE SEQUENCE [LARGE SCALE MRNA]</scope>
    <source>
        <strain>C57BL/6J</strain>
        <tissue>Brain</tissue>
    </source>
</reference>
<reference key="3">
    <citation type="journal article" date="2007" name="Circ. Res.">
        <title>Coronary vessel development is dependent on the type III transforming growth factor beta receptor.</title>
        <authorList>
            <person name="Compton L.A."/>
            <person name="Potash D.A."/>
            <person name="Brown C.B."/>
            <person name="Barnett J.V."/>
        </authorList>
    </citation>
    <scope>FUNCTION</scope>
    <scope>DISRUPTION PHENOTYPE</scope>
</reference>
<reference key="4">
    <citation type="journal article" date="2011" name="Dev. Biol.">
        <title>The cytoplasmic domain of TGFbetaR3 through its interaction with the scaffolding protein, GIPC, directs epicardial cell behavior.</title>
        <authorList>
            <person name="Sanchez N.S."/>
            <person name="Hill C.R."/>
            <person name="Love J.D."/>
            <person name="Soslow J.H."/>
            <person name="Craig E."/>
            <person name="Austin A.F."/>
            <person name="Brown C.B."/>
            <person name="Czirok A."/>
            <person name="Camenisch T.D."/>
            <person name="Barnett J.V."/>
        </authorList>
    </citation>
    <scope>FUNCTION</scope>
    <scope>INTERACTION WITH GIPC</scope>
</reference>
<reference key="5">
    <citation type="journal article" date="2012" name="Cell. Signal.">
        <title>TGFbeta and BMP-2 regulate epicardial cell invasion via TGFbetaR3 activation of the Par6/Smurf1/RhoA pathway.</title>
        <authorList>
            <person name="Sanchez N.S."/>
            <person name="Barnett J.V."/>
        </authorList>
    </citation>
    <scope>FUNCTION</scope>
    <scope>DISRUPTION PHENOTYPE</scope>
</reference>
<reference key="6">
    <citation type="journal article" date="2018" name="Endocrinology">
        <title>Betaglycan (TGFBR3) Functions as an Inhibin A, but Not Inhibin B, Coreceptor in Pituitary Gonadotrope Cells in Mice.</title>
        <authorList>
            <person name="Li Y."/>
            <person name="Fortin J."/>
            <person name="Ongaro L."/>
            <person name="Zhou X."/>
            <person name="Boehm U."/>
            <person name="Schneyer A."/>
            <person name="Bernard D.J."/>
            <person name="Lin H.Y."/>
        </authorList>
    </citation>
    <scope>DISRUPTION PHENOTYPE</scope>
    <scope>FUNCTION</scope>
</reference>
<reference key="7">
    <citation type="journal article" date="2021" name="Sci. Adv.">
        <title>TGFBR3L is an inhibin B co-receptor that regulates female fertility.</title>
        <authorList>
            <person name="Brule E."/>
            <person name="Wang Y."/>
            <person name="Li Y."/>
            <person name="Lin Y.F."/>
            <person name="Zhou X."/>
            <person name="Ongaro L."/>
            <person name="Alonso C.A.I."/>
            <person name="Buddle E.R.S."/>
            <person name="Schneyer A.L."/>
            <person name="Byeon C.H."/>
            <person name="Hinck C.S."/>
            <person name="Mendelev N."/>
            <person name="Russell J.P."/>
            <person name="Cowan M."/>
            <person name="Boehm U."/>
            <person name="Ruf-Zamojski F."/>
            <person name="Zamojski M."/>
            <person name="Andoniadou C.L."/>
            <person name="Sealfon S.C."/>
            <person name="Harrison C.A."/>
            <person name="Walton K.L."/>
            <person name="Hinck A.P."/>
            <person name="Bernard D.J."/>
        </authorList>
    </citation>
    <scope>DISRUPTION PHENOTYPE</scope>
    <scope>FUNCTION</scope>
</reference>
<reference key="8">
    <citation type="journal article" date="2013" name="PLoS ONE">
        <title>Identification of a novel TGF-beta-binding site in the zona pellucida C-terminal (ZP-C) domain of TGF-beta-receptor-3 (TGFR-3).</title>
        <authorList>
            <person name="Diestel U."/>
            <person name="Resch M."/>
            <person name="Meinhardt K."/>
            <person name="Weiler S."/>
            <person name="Hellmann T.V."/>
            <person name="Mueller T.D."/>
            <person name="Nickel J."/>
            <person name="Eichler J."/>
            <person name="Muller Y.A."/>
        </authorList>
    </citation>
    <scope>X-RAY CRYSTALLOGRAPHY (2.7 ANGSTROMS) OF 591-757</scope>
    <scope>DISULFIDE BONDS</scope>
    <scope>INTERACTION WITH TGF-BETA</scope>
</reference>
<comment type="function">
    <text evidence="1 9 10">Cell surface receptor that regulates diverse cellular processes including cell proliferation, differentiation, migration, and apoptosis. Initiates BMP, inhibin, and TGF-beta signaling pathways by interacting with different ligands including TGFB1, BMP2, BMP5, BMP7 or GDF5. Alternatively, acts as a cell surface coreceptor for BMP ligands, serving to enhance ligand binding by differentially regulating BMPR1A/ALK3 and BMPR1B/ALK6 receptor trafficking. Promotes epithelial cell adhesion, focal adhesion formation and integrin signaling during epithelial cell spreading on fibronectin. By interacting with the scaffolding protein beta-arrestin2/ARRB2, regulates migration or actin cytoskeleton and promotes the activation of CDC42 as well as the inhibition of NF-kappa-B (By similarity). In gonadotrope cells, acts as an inhibin A coreceptor and regulates follicle-stimulating hormone (FSH) levels and female fertility (PubMed:30364975, PubMed:34910520). Plays a role in the inhibition of directed and random cell migration in epithelial cells by altering the actin cytoskeletal organization (By similarity). Participates in epithelial-mesenchymal transformation (EMT) upon binding to BMP2 or TGFB2, by activating the PAR6/SMURF1/RHOA pathway (By similarity).</text>
</comment>
<comment type="subunit">
    <text evidence="2">Forms homodimers and homooligomers. Interacts with DYNLT4. Interacts with integrin ITGA5:ITGB1; this interaction promotes the internalization and trafficking of ITGA5:ITGB1 into endocytic vesicles. Interacts with TGFB1, BMP2, BMP5, BMP7 or GDF5 and inhibin A via the ligand binding domains. Interacts with ALK3/BMPR1A; this interaction results in the cell surface retention of BMPR1A. Interacts with ALK6/BMPR1B; this interaction enhances BMPR1B-mediated stimulation of the BMP signaling pathway. Interacts with the scaffolding protein beta-arrestin2/ARRB2; this interaction mediates internalization of TGFBR3 and thus regulates migration, actin cytoskeleton and activation of CDC42.</text>
</comment>
<comment type="subcellular location">
    <subcellularLocation>
        <location evidence="1">Cell membrane</location>
        <topology evidence="3">Single-pass type I membrane protein</topology>
    </subcellularLocation>
    <subcellularLocation>
        <location evidence="1">Secreted</location>
    </subcellularLocation>
    <subcellularLocation>
        <location evidence="1">Secreted</location>
        <location evidence="1">Extracellular space</location>
        <location evidence="1">Extracellular matrix</location>
    </subcellularLocation>
    <text evidence="1">Exists both as a membrane-bound form and as soluble form in serum and in the extracellular matrix.</text>
</comment>
<comment type="PTM">
    <text evidence="2">Extensively modified by glycosaminoglycan groups (GAG).</text>
</comment>
<comment type="PTM">
    <text evidence="2">Phosphorylated in the cytoplasmic domain by the type II receptor TGFBR2 at THR-839 to mediate recruitment of ARRB2 and subsequent internalization of TGFBR2 and TGFBR3.</text>
</comment>
<comment type="disruption phenotype">
    <text evidence="6 7 9 10">Tgfbr3 deletion in mice is embryonic lethal at E14.5 due to failed coronary vessel formation associated with decreased epicardial cell invasion (PubMed:17704211, PubMed:22033038). Gonadotrope-specific knockout females are supra-fertile with enhanced folliculogenesis, numbers of ovulated eggs per cycle and litter sizes relative to control mice (PubMed:30364975). Double knockout females for TGFBR3L and gonadotrope-specific TGFBR3 are infertile. They have increased serum follicle-stimulating hormone (FSH), pituitary protein content relative to controls. They have larger ovaries with increased numbers of antral follicles and corpora lutea (PubMed:34910520).</text>
</comment>
<accession>O88393</accession>
<accession>Q6NS72</accession>
<dbReference type="EMBL" id="AF039601">
    <property type="protein sequence ID" value="AAC28564.1"/>
    <property type="molecule type" value="mRNA"/>
</dbReference>
<dbReference type="EMBL" id="BC070428">
    <property type="protein sequence ID" value="AAH70428.1"/>
    <property type="molecule type" value="mRNA"/>
</dbReference>
<dbReference type="CCDS" id="CCDS19499.1"/>
<dbReference type="RefSeq" id="NP_035708.2">
    <property type="nucleotide sequence ID" value="NM_011578.4"/>
</dbReference>
<dbReference type="PDB" id="4AJV">
    <property type="method" value="X-ray"/>
    <property type="resolution" value="2.70 A"/>
    <property type="chains" value="A=591-757"/>
</dbReference>
<dbReference type="PDBsum" id="4AJV"/>
<dbReference type="SMR" id="O88393"/>
<dbReference type="BioGRID" id="204165">
    <property type="interactions" value="2"/>
</dbReference>
<dbReference type="FunCoup" id="O88393">
    <property type="interactions" value="552"/>
</dbReference>
<dbReference type="STRING" id="10090.ENSMUSP00000031224"/>
<dbReference type="GlyCosmos" id="O88393">
    <property type="glycosylation" value="7 sites, No reported glycans"/>
</dbReference>
<dbReference type="GlyGen" id="O88393">
    <property type="glycosylation" value="7 sites, 2 N-linked glycans (2 sites)"/>
</dbReference>
<dbReference type="iPTMnet" id="O88393"/>
<dbReference type="PhosphoSitePlus" id="O88393"/>
<dbReference type="PaxDb" id="10090-ENSMUSP00000031224"/>
<dbReference type="PeptideAtlas" id="O88393"/>
<dbReference type="ProteomicsDB" id="263036"/>
<dbReference type="Pumba" id="O88393"/>
<dbReference type="DNASU" id="21814"/>
<dbReference type="GeneID" id="21814"/>
<dbReference type="KEGG" id="mmu:21814"/>
<dbReference type="UCSC" id="uc008ylz.2">
    <property type="organism name" value="mouse"/>
</dbReference>
<dbReference type="AGR" id="MGI:104637"/>
<dbReference type="CTD" id="7049"/>
<dbReference type="MGI" id="MGI:104637">
    <property type="gene designation" value="Tgfbr3"/>
</dbReference>
<dbReference type="eggNOG" id="ENOG502QWNZ">
    <property type="taxonomic scope" value="Eukaryota"/>
</dbReference>
<dbReference type="InParanoid" id="O88393"/>
<dbReference type="OrthoDB" id="6420824at2759"/>
<dbReference type="PhylomeDB" id="O88393"/>
<dbReference type="TreeFam" id="TF337375"/>
<dbReference type="Reactome" id="R-MMU-1502540">
    <property type="pathway name" value="Signaling by Activin"/>
</dbReference>
<dbReference type="Reactome" id="R-MMU-190370">
    <property type="pathway name" value="FGFR1b ligand binding and activation"/>
</dbReference>
<dbReference type="Reactome" id="R-MMU-190373">
    <property type="pathway name" value="FGFR1c ligand binding and activation"/>
</dbReference>
<dbReference type="Reactome" id="R-MMU-201451">
    <property type="pathway name" value="Signaling by BMP"/>
</dbReference>
<dbReference type="Reactome" id="R-MMU-2173789">
    <property type="pathway name" value="TGF-beta receptor signaling activates SMADs"/>
</dbReference>
<dbReference type="Reactome" id="R-MMU-9839383">
    <property type="pathway name" value="TGFBR3 PTM regulation"/>
</dbReference>
<dbReference type="Reactome" id="R-MMU-9839389">
    <property type="pathway name" value="TGFBR3 regulates TGF-beta signaling"/>
</dbReference>
<dbReference type="Reactome" id="R-MMU-9839397">
    <property type="pathway name" value="TGFBR3 regulates FGF2 signaling"/>
</dbReference>
<dbReference type="Reactome" id="R-MMU-9839406">
    <property type="pathway name" value="TGFBR3 regulates activin signaling"/>
</dbReference>
<dbReference type="BioGRID-ORCS" id="21814">
    <property type="hits" value="5 hits in 79 CRISPR screens"/>
</dbReference>
<dbReference type="ChiTaRS" id="Tgfbr3">
    <property type="organism name" value="mouse"/>
</dbReference>
<dbReference type="EvolutionaryTrace" id="O88393"/>
<dbReference type="PRO" id="PR:O88393"/>
<dbReference type="Proteomes" id="UP000000589">
    <property type="component" value="Unplaced"/>
</dbReference>
<dbReference type="RNAct" id="O88393">
    <property type="molecule type" value="protein"/>
</dbReference>
<dbReference type="GO" id="GO:0009986">
    <property type="term" value="C:cell surface"/>
    <property type="evidence" value="ECO:0000314"/>
    <property type="project" value="BHF-UCL"/>
</dbReference>
<dbReference type="GO" id="GO:0005737">
    <property type="term" value="C:cytoplasm"/>
    <property type="evidence" value="ECO:0000314"/>
    <property type="project" value="MGI"/>
</dbReference>
<dbReference type="GO" id="GO:0005783">
    <property type="term" value="C:endoplasmic reticulum"/>
    <property type="evidence" value="ECO:0000314"/>
    <property type="project" value="MGI"/>
</dbReference>
<dbReference type="GO" id="GO:0005576">
    <property type="term" value="C:extracellular region"/>
    <property type="evidence" value="ECO:0007669"/>
    <property type="project" value="UniProtKB-SubCell"/>
</dbReference>
<dbReference type="GO" id="GO:0005886">
    <property type="term" value="C:plasma membrane"/>
    <property type="evidence" value="ECO:0000304"/>
    <property type="project" value="DFLAT"/>
</dbReference>
<dbReference type="GO" id="GO:0005539">
    <property type="term" value="F:glycosaminoglycan binding"/>
    <property type="evidence" value="ECO:0000314"/>
    <property type="project" value="BHF-UCL"/>
</dbReference>
<dbReference type="GO" id="GO:0030165">
    <property type="term" value="F:PDZ domain binding"/>
    <property type="evidence" value="ECO:0000353"/>
    <property type="project" value="BHF-UCL"/>
</dbReference>
<dbReference type="GO" id="GO:0046332">
    <property type="term" value="F:SMAD binding"/>
    <property type="evidence" value="ECO:0000315"/>
    <property type="project" value="BHF-UCL"/>
</dbReference>
<dbReference type="GO" id="GO:0050431">
    <property type="term" value="F:transforming growth factor beta binding"/>
    <property type="evidence" value="ECO:0000314"/>
    <property type="project" value="BHF-UCL"/>
</dbReference>
<dbReference type="GO" id="GO:0005024">
    <property type="term" value="F:transforming growth factor beta receptor activity"/>
    <property type="evidence" value="ECO:0000314"/>
    <property type="project" value="BHF-UCL"/>
</dbReference>
<dbReference type="GO" id="GO:0060561">
    <property type="term" value="P:apoptotic process involved in morphogenesis"/>
    <property type="evidence" value="ECO:0000315"/>
    <property type="project" value="MGI"/>
</dbReference>
<dbReference type="GO" id="GO:0001824">
    <property type="term" value="P:blastocyst development"/>
    <property type="evidence" value="ECO:0000314"/>
    <property type="project" value="MGI"/>
</dbReference>
<dbReference type="GO" id="GO:0001568">
    <property type="term" value="P:blood vessel development"/>
    <property type="evidence" value="ECO:0000315"/>
    <property type="project" value="MGI"/>
</dbReference>
<dbReference type="GO" id="GO:0097746">
    <property type="term" value="P:blood vessel diameter maintenance"/>
    <property type="evidence" value="ECO:0000304"/>
    <property type="project" value="DFLAT"/>
</dbReference>
<dbReference type="GO" id="GO:0001974">
    <property type="term" value="P:blood vessel remodeling"/>
    <property type="evidence" value="ECO:0000315"/>
    <property type="project" value="MGI"/>
</dbReference>
<dbReference type="GO" id="GO:0030509">
    <property type="term" value="P:BMP signaling pathway"/>
    <property type="evidence" value="ECO:0000315"/>
    <property type="project" value="MGI"/>
</dbReference>
<dbReference type="GO" id="GO:0060038">
    <property type="term" value="P:cardiac muscle cell proliferation"/>
    <property type="evidence" value="ECO:0000315"/>
    <property type="project" value="BHF-UCL"/>
</dbReference>
<dbReference type="GO" id="GO:0008283">
    <property type="term" value="P:cell population proliferation"/>
    <property type="evidence" value="ECO:0000315"/>
    <property type="project" value="MGI"/>
</dbReference>
<dbReference type="GO" id="GO:0032963">
    <property type="term" value="P:collagen metabolic process"/>
    <property type="evidence" value="ECO:0000316"/>
    <property type="project" value="BHF-UCL"/>
</dbReference>
<dbReference type="GO" id="GO:0060976">
    <property type="term" value="P:coronary vasculature development"/>
    <property type="evidence" value="ECO:0000304"/>
    <property type="project" value="DFLAT"/>
</dbReference>
<dbReference type="GO" id="GO:0060977">
    <property type="term" value="P:coronary vasculature morphogenesis"/>
    <property type="evidence" value="ECO:0000304"/>
    <property type="project" value="DFLAT"/>
</dbReference>
<dbReference type="GO" id="GO:0060318">
    <property type="term" value="P:definitive erythrocyte differentiation"/>
    <property type="evidence" value="ECO:0000315"/>
    <property type="project" value="BHF-UCL"/>
</dbReference>
<dbReference type="GO" id="GO:0060216">
    <property type="term" value="P:definitive hemopoiesis"/>
    <property type="evidence" value="ECO:0000315"/>
    <property type="project" value="BHF-UCL"/>
</dbReference>
<dbReference type="GO" id="GO:0003347">
    <property type="term" value="P:epicardial cell to mesenchymal cell transition"/>
    <property type="evidence" value="ECO:0000304"/>
    <property type="project" value="DFLAT"/>
</dbReference>
<dbReference type="GO" id="GO:0060939">
    <property type="term" value="P:epicardium-derived cardiac fibroblast cell development"/>
    <property type="evidence" value="ECO:0000315"/>
    <property type="project" value="BHF-UCL"/>
</dbReference>
<dbReference type="GO" id="GO:0060347">
    <property type="term" value="P:heart trabecula formation"/>
    <property type="evidence" value="ECO:0000315"/>
    <property type="project" value="BHF-UCL"/>
</dbReference>
<dbReference type="GO" id="GO:0061384">
    <property type="term" value="P:heart trabecula morphogenesis"/>
    <property type="evidence" value="ECO:0000315"/>
    <property type="project" value="BHF-UCL"/>
</dbReference>
<dbReference type="GO" id="GO:0001701">
    <property type="term" value="P:in utero embryonic development"/>
    <property type="evidence" value="ECO:0000315"/>
    <property type="project" value="MGI"/>
</dbReference>
<dbReference type="GO" id="GO:0001889">
    <property type="term" value="P:liver development"/>
    <property type="evidence" value="ECO:0000315"/>
    <property type="project" value="BHF-UCL"/>
</dbReference>
<dbReference type="GO" id="GO:0003150">
    <property type="term" value="P:muscular septum morphogenesis"/>
    <property type="evidence" value="ECO:0000315"/>
    <property type="project" value="BHF-UCL"/>
</dbReference>
<dbReference type="GO" id="GO:1902338">
    <property type="term" value="P:negative regulation of apoptotic process involved in morphogenesis"/>
    <property type="evidence" value="ECO:0000315"/>
    <property type="project" value="MGI"/>
</dbReference>
<dbReference type="GO" id="GO:0010633">
    <property type="term" value="P:negative regulation of epithelial cell migration"/>
    <property type="evidence" value="ECO:0000315"/>
    <property type="project" value="MGI"/>
</dbReference>
<dbReference type="GO" id="GO:0050680">
    <property type="term" value="P:negative regulation of epithelial cell proliferation"/>
    <property type="evidence" value="ECO:0000315"/>
    <property type="project" value="BHF-UCL"/>
</dbReference>
<dbReference type="GO" id="GO:0010719">
    <property type="term" value="P:negative regulation of epithelial to mesenchymal transition"/>
    <property type="evidence" value="ECO:0000315"/>
    <property type="project" value="MGI"/>
</dbReference>
<dbReference type="GO" id="GO:0010629">
    <property type="term" value="P:negative regulation of gene expression"/>
    <property type="evidence" value="ECO:0000314"/>
    <property type="project" value="BHF-UCL"/>
</dbReference>
<dbReference type="GO" id="GO:0001649">
    <property type="term" value="P:osteoblast differentiation"/>
    <property type="evidence" value="ECO:0000315"/>
    <property type="project" value="MGI"/>
</dbReference>
<dbReference type="GO" id="GO:0003151">
    <property type="term" value="P:outflow tract morphogenesis"/>
    <property type="evidence" value="ECO:0000315"/>
    <property type="project" value="BHF-UCL"/>
</dbReference>
<dbReference type="GO" id="GO:0030513">
    <property type="term" value="P:positive regulation of BMP signaling pathway"/>
    <property type="evidence" value="ECO:0000315"/>
    <property type="project" value="MGI"/>
</dbReference>
<dbReference type="GO" id="GO:0060045">
    <property type="term" value="P:positive regulation of cardiac muscle cell proliferation"/>
    <property type="evidence" value="ECO:0000315"/>
    <property type="project" value="BHF-UCL"/>
</dbReference>
<dbReference type="GO" id="GO:0008284">
    <property type="term" value="P:positive regulation of cell population proliferation"/>
    <property type="evidence" value="ECO:0000315"/>
    <property type="project" value="MGI"/>
</dbReference>
<dbReference type="GO" id="GO:0060391">
    <property type="term" value="P:positive regulation of SMAD protein signal transduction"/>
    <property type="evidence" value="ECO:0000315"/>
    <property type="project" value="BHF-UCL"/>
</dbReference>
<dbReference type="GO" id="GO:0030511">
    <property type="term" value="P:positive regulation of transforming growth factor beta receptor signaling pathway"/>
    <property type="evidence" value="ECO:0000315"/>
    <property type="project" value="MGI"/>
</dbReference>
<dbReference type="GO" id="GO:0060021">
    <property type="term" value="P:roof of mouth development"/>
    <property type="evidence" value="ECO:0000315"/>
    <property type="project" value="MGI"/>
</dbReference>
<dbReference type="GO" id="GO:0062009">
    <property type="term" value="P:secondary palate development"/>
    <property type="evidence" value="ECO:0000315"/>
    <property type="project" value="BHF-UCL"/>
</dbReference>
<dbReference type="GO" id="GO:0007179">
    <property type="term" value="P:transforming growth factor beta receptor signaling pathway"/>
    <property type="evidence" value="ECO:0000314"/>
    <property type="project" value="BHF-UCL"/>
</dbReference>
<dbReference type="GO" id="GO:0001570">
    <property type="term" value="P:vasculogenesis"/>
    <property type="evidence" value="ECO:0000315"/>
    <property type="project" value="MGI"/>
</dbReference>
<dbReference type="GO" id="GO:0060979">
    <property type="term" value="P:vasculogenesis involved in coronary vascular morphogenesis"/>
    <property type="evidence" value="ECO:0000315"/>
    <property type="project" value="BHF-UCL"/>
</dbReference>
<dbReference type="GO" id="GO:0055010">
    <property type="term" value="P:ventricular cardiac muscle tissue morphogenesis"/>
    <property type="evidence" value="ECO:0000315"/>
    <property type="project" value="BHF-UCL"/>
</dbReference>
<dbReference type="GO" id="GO:0003223">
    <property type="term" value="P:ventricular compact myocardium morphogenesis"/>
    <property type="evidence" value="ECO:0000315"/>
    <property type="project" value="BHF-UCL"/>
</dbReference>
<dbReference type="GO" id="GO:0060412">
    <property type="term" value="P:ventricular septum morphogenesis"/>
    <property type="evidence" value="ECO:0000315"/>
    <property type="project" value="BHF-UCL"/>
</dbReference>
<dbReference type="GO" id="GO:0061032">
    <property type="term" value="P:visceral serous pericardium development"/>
    <property type="evidence" value="ECO:0000304"/>
    <property type="project" value="DFLAT"/>
</dbReference>
<dbReference type="DisProt" id="DP02636"/>
<dbReference type="FunFam" id="2.60.40.3210:FF:000008">
    <property type="entry name" value="Transforming growth factor beta receptor 3"/>
    <property type="match status" value="1"/>
</dbReference>
<dbReference type="FunFam" id="2.60.40.4100:FF:000003">
    <property type="entry name" value="Transforming growth factor beta receptor type 3"/>
    <property type="match status" value="1"/>
</dbReference>
<dbReference type="Gene3D" id="2.60.40.4100">
    <property type="entry name" value="Zona pellucida, ZP-C domain"/>
    <property type="match status" value="1"/>
</dbReference>
<dbReference type="Gene3D" id="2.60.40.3210">
    <property type="entry name" value="Zona pellucida, ZP-N domain"/>
    <property type="match status" value="1"/>
</dbReference>
<dbReference type="InterPro" id="IPR055355">
    <property type="entry name" value="ZP-C"/>
</dbReference>
<dbReference type="InterPro" id="IPR042235">
    <property type="entry name" value="ZP-C_dom"/>
</dbReference>
<dbReference type="InterPro" id="IPR055356">
    <property type="entry name" value="ZP-N"/>
</dbReference>
<dbReference type="InterPro" id="IPR048290">
    <property type="entry name" value="ZP_chr"/>
</dbReference>
<dbReference type="InterPro" id="IPR001507">
    <property type="entry name" value="ZP_dom"/>
</dbReference>
<dbReference type="InterPro" id="IPR017977">
    <property type="entry name" value="ZP_dom_CS"/>
</dbReference>
<dbReference type="PANTHER" id="PTHR14002">
    <property type="entry name" value="ENDOGLIN/TGF-BETA RECEPTOR TYPE III"/>
    <property type="match status" value="1"/>
</dbReference>
<dbReference type="PANTHER" id="PTHR14002:SF7">
    <property type="entry name" value="TRANSFORMING GROWTH FACTOR BETA RECEPTOR TYPE 3"/>
    <property type="match status" value="1"/>
</dbReference>
<dbReference type="Pfam" id="PF00100">
    <property type="entry name" value="Zona_pellucida"/>
    <property type="match status" value="1"/>
</dbReference>
<dbReference type="Pfam" id="PF23344">
    <property type="entry name" value="ZP-N"/>
    <property type="match status" value="1"/>
</dbReference>
<dbReference type="PRINTS" id="PR00023">
    <property type="entry name" value="ZPELLUCIDA"/>
</dbReference>
<dbReference type="SMART" id="SM00241">
    <property type="entry name" value="ZP"/>
    <property type="match status" value="1"/>
</dbReference>
<dbReference type="PROSITE" id="PS00682">
    <property type="entry name" value="ZP_1"/>
    <property type="match status" value="1"/>
</dbReference>
<dbReference type="PROSITE" id="PS51034">
    <property type="entry name" value="ZP_2"/>
    <property type="match status" value="1"/>
</dbReference>
<gene>
    <name type="primary">Tgfbr3</name>
</gene>
<name>TGBR3_MOUSE</name>
<evidence type="ECO:0000250" key="1">
    <source>
        <dbReference type="UniProtKB" id="P26342"/>
    </source>
</evidence>
<evidence type="ECO:0000250" key="2">
    <source>
        <dbReference type="UniProtKB" id="Q03167"/>
    </source>
</evidence>
<evidence type="ECO:0000255" key="3"/>
<evidence type="ECO:0000255" key="4">
    <source>
        <dbReference type="PROSITE-ProRule" id="PRU00375"/>
    </source>
</evidence>
<evidence type="ECO:0000256" key="5">
    <source>
        <dbReference type="SAM" id="MobiDB-lite"/>
    </source>
</evidence>
<evidence type="ECO:0000269" key="6">
    <source>
    </source>
</evidence>
<evidence type="ECO:0000269" key="7">
    <source>
    </source>
</evidence>
<evidence type="ECO:0000269" key="8">
    <source>
    </source>
</evidence>
<evidence type="ECO:0000269" key="9">
    <source>
    </source>
</evidence>
<evidence type="ECO:0000269" key="10">
    <source>
    </source>
</evidence>
<evidence type="ECO:0000269" key="11">
    <source>
    </source>
</evidence>
<evidence type="ECO:0000305" key="12"/>
<evidence type="ECO:0007829" key="13">
    <source>
        <dbReference type="PDB" id="4AJV"/>
    </source>
</evidence>